<keyword id="KW-0963">Cytoplasm</keyword>
<keyword id="KW-0648">Protein biosynthesis</keyword>
<reference key="1">
    <citation type="journal article" date="2005" name="Genome Res.">
        <title>The Chlamydophila abortus genome sequence reveals an array of variable proteins that contribute to interspecies variation.</title>
        <authorList>
            <person name="Thomson N.R."/>
            <person name="Yeats C."/>
            <person name="Bell K."/>
            <person name="Holden M.T.G."/>
            <person name="Bentley S.D."/>
            <person name="Livingstone M."/>
            <person name="Cerdeno-Tarraga A.-M."/>
            <person name="Harris B."/>
            <person name="Doggett J."/>
            <person name="Ormond D."/>
            <person name="Mungall K."/>
            <person name="Clarke K."/>
            <person name="Feltwell T."/>
            <person name="Hance Z."/>
            <person name="Sanders M."/>
            <person name="Quail M.A."/>
            <person name="Price C."/>
            <person name="Barrell B.G."/>
            <person name="Parkhill J."/>
            <person name="Longbottom D."/>
        </authorList>
    </citation>
    <scope>NUCLEOTIDE SEQUENCE [LARGE SCALE GENOMIC DNA]</scope>
    <source>
        <strain>DSM 27085 / S26/3</strain>
    </source>
</reference>
<gene>
    <name evidence="1" type="primary">frr</name>
    <name type="ordered locus">CAB044</name>
</gene>
<proteinExistence type="inferred from homology"/>
<sequence length="180" mass="20134">MSILADTEKKMAAALEFFTKEVRSFRTGKANPALVETVTVDVYGTTMRLSDLASISVADTRQLVISPYDANNVSAISKGIIAANLNLQPDVEGSIVRIKIPEPTAEYRNEVIKQLRRKSEEAKVAIRNIRRESNDKLKKDSDLTEDAVKGMEKKIQELTDKFCKQIDKMSKQKEVDLSSI</sequence>
<organism>
    <name type="scientific">Chlamydia abortus (strain DSM 27085 / S26/3)</name>
    <name type="common">Chlamydophila abortus</name>
    <dbReference type="NCBI Taxonomy" id="218497"/>
    <lineage>
        <taxon>Bacteria</taxon>
        <taxon>Pseudomonadati</taxon>
        <taxon>Chlamydiota</taxon>
        <taxon>Chlamydiia</taxon>
        <taxon>Chlamydiales</taxon>
        <taxon>Chlamydiaceae</taxon>
        <taxon>Chlamydia/Chlamydophila group</taxon>
        <taxon>Chlamydia</taxon>
    </lineage>
</organism>
<comment type="function">
    <text evidence="1">Responsible for the release of ribosomes from messenger RNA at the termination of protein biosynthesis. May increase the efficiency of translation by recycling ribosomes from one round of translation to another.</text>
</comment>
<comment type="subcellular location">
    <subcellularLocation>
        <location evidence="1">Cytoplasm</location>
    </subcellularLocation>
</comment>
<comment type="similarity">
    <text evidence="1">Belongs to the RRF family.</text>
</comment>
<accession>Q5L766</accession>
<dbReference type="EMBL" id="CR848038">
    <property type="protein sequence ID" value="CAH63502.1"/>
    <property type="molecule type" value="Genomic_DNA"/>
</dbReference>
<dbReference type="RefSeq" id="WP_011096789.1">
    <property type="nucleotide sequence ID" value="NC_004552.2"/>
</dbReference>
<dbReference type="SMR" id="Q5L766"/>
<dbReference type="KEGG" id="cab:CAB044"/>
<dbReference type="eggNOG" id="COG0233">
    <property type="taxonomic scope" value="Bacteria"/>
</dbReference>
<dbReference type="HOGENOM" id="CLU_073981_2_1_0"/>
<dbReference type="OrthoDB" id="9804006at2"/>
<dbReference type="Proteomes" id="UP000001012">
    <property type="component" value="Chromosome"/>
</dbReference>
<dbReference type="GO" id="GO:0005737">
    <property type="term" value="C:cytoplasm"/>
    <property type="evidence" value="ECO:0007669"/>
    <property type="project" value="UniProtKB-SubCell"/>
</dbReference>
<dbReference type="GO" id="GO:0043023">
    <property type="term" value="F:ribosomal large subunit binding"/>
    <property type="evidence" value="ECO:0007669"/>
    <property type="project" value="TreeGrafter"/>
</dbReference>
<dbReference type="GO" id="GO:0006415">
    <property type="term" value="P:translational termination"/>
    <property type="evidence" value="ECO:0007669"/>
    <property type="project" value="UniProtKB-UniRule"/>
</dbReference>
<dbReference type="CDD" id="cd00520">
    <property type="entry name" value="RRF"/>
    <property type="match status" value="1"/>
</dbReference>
<dbReference type="FunFam" id="1.10.132.20:FF:000001">
    <property type="entry name" value="Ribosome-recycling factor"/>
    <property type="match status" value="1"/>
</dbReference>
<dbReference type="FunFam" id="3.30.1360.40:FF:000001">
    <property type="entry name" value="Ribosome-recycling factor"/>
    <property type="match status" value="1"/>
</dbReference>
<dbReference type="Gene3D" id="3.30.1360.40">
    <property type="match status" value="1"/>
</dbReference>
<dbReference type="Gene3D" id="1.10.132.20">
    <property type="entry name" value="Ribosome-recycling factor"/>
    <property type="match status" value="1"/>
</dbReference>
<dbReference type="HAMAP" id="MF_00040">
    <property type="entry name" value="RRF"/>
    <property type="match status" value="1"/>
</dbReference>
<dbReference type="InterPro" id="IPR002661">
    <property type="entry name" value="Ribosome_recyc_fac"/>
</dbReference>
<dbReference type="InterPro" id="IPR023584">
    <property type="entry name" value="Ribosome_recyc_fac_dom"/>
</dbReference>
<dbReference type="InterPro" id="IPR036191">
    <property type="entry name" value="RRF_sf"/>
</dbReference>
<dbReference type="NCBIfam" id="TIGR00496">
    <property type="entry name" value="frr"/>
    <property type="match status" value="1"/>
</dbReference>
<dbReference type="PANTHER" id="PTHR20982:SF3">
    <property type="entry name" value="MITOCHONDRIAL RIBOSOME RECYCLING FACTOR PSEUDO 1"/>
    <property type="match status" value="1"/>
</dbReference>
<dbReference type="PANTHER" id="PTHR20982">
    <property type="entry name" value="RIBOSOME RECYCLING FACTOR"/>
    <property type="match status" value="1"/>
</dbReference>
<dbReference type="Pfam" id="PF01765">
    <property type="entry name" value="RRF"/>
    <property type="match status" value="1"/>
</dbReference>
<dbReference type="SUPFAM" id="SSF55194">
    <property type="entry name" value="Ribosome recycling factor, RRF"/>
    <property type="match status" value="1"/>
</dbReference>
<feature type="chain" id="PRO_0000167437" description="Ribosome-recycling factor">
    <location>
        <begin position="1"/>
        <end position="180"/>
    </location>
</feature>
<protein>
    <recommendedName>
        <fullName evidence="1">Ribosome-recycling factor</fullName>
        <shortName evidence="1">RRF</shortName>
    </recommendedName>
    <alternativeName>
        <fullName evidence="1">Ribosome-releasing factor</fullName>
    </alternativeName>
</protein>
<evidence type="ECO:0000255" key="1">
    <source>
        <dbReference type="HAMAP-Rule" id="MF_00040"/>
    </source>
</evidence>
<name>RRF_CHLAB</name>